<accession>A0A8F4NUX3</accession>
<dbReference type="EMBL" id="MW690134">
    <property type="protein sequence ID" value="QXF14597.1"/>
    <property type="molecule type" value="Genomic_DNA"/>
</dbReference>
<dbReference type="GO" id="GO:0005634">
    <property type="term" value="C:nucleus"/>
    <property type="evidence" value="ECO:0007669"/>
    <property type="project" value="UniProtKB-SubCell"/>
</dbReference>
<evidence type="ECO:0000256" key="1">
    <source>
        <dbReference type="SAM" id="MobiDB-lite"/>
    </source>
</evidence>
<evidence type="ECO:0000269" key="2">
    <source>
    </source>
</evidence>
<evidence type="ECO:0000303" key="3">
    <source>
    </source>
</evidence>
<evidence type="ECO:0000305" key="4"/>
<feature type="chain" id="PRO_0000458429" description="Transcription factor pydF">
    <location>
        <begin position="1"/>
        <end position="439"/>
    </location>
</feature>
<feature type="region of interest" description="Disordered" evidence="1">
    <location>
        <begin position="1"/>
        <end position="53"/>
    </location>
</feature>
<feature type="region of interest" description="Disordered" evidence="1">
    <location>
        <begin position="143"/>
        <end position="177"/>
    </location>
</feature>
<feature type="region of interest" description="Disordered" evidence="1">
    <location>
        <begin position="239"/>
        <end position="262"/>
    </location>
</feature>
<feature type="compositionally biased region" description="Basic and acidic residues" evidence="1">
    <location>
        <begin position="1"/>
        <end position="18"/>
    </location>
</feature>
<feature type="compositionally biased region" description="Polar residues" evidence="1">
    <location>
        <begin position="20"/>
        <end position="35"/>
    </location>
</feature>
<feature type="compositionally biased region" description="Basic and acidic residues" evidence="1">
    <location>
        <begin position="143"/>
        <end position="153"/>
    </location>
</feature>
<feature type="compositionally biased region" description="Low complexity" evidence="1">
    <location>
        <begin position="157"/>
        <end position="172"/>
    </location>
</feature>
<feature type="compositionally biased region" description="Polar residues" evidence="1">
    <location>
        <begin position="243"/>
        <end position="260"/>
    </location>
</feature>
<organism>
    <name type="scientific">Acremonium sp</name>
    <dbReference type="NCBI Taxonomy" id="2046025"/>
    <lineage>
        <taxon>Eukaryota</taxon>
        <taxon>Fungi</taxon>
        <taxon>Dikarya</taxon>
        <taxon>Ascomycota</taxon>
        <taxon>Pezizomycotina</taxon>
        <taxon>Sordariomycetes</taxon>
        <taxon>Hypocreomycetidae</taxon>
        <taxon>Hypocreales</taxon>
        <taxon>Hypocreales incertae sedis</taxon>
        <taxon>Acremonium</taxon>
    </lineage>
</organism>
<comment type="function">
    <text evidence="2">Transcription factor; part of the gene cluster that mediates the biosynthesis of pyrrocidines, fungal natural products containing a macrocyclic para-cyclophane connected to a decahydrofluorene ring system that show potent antibiotic activities toward Gram-negative bacteria.</text>
</comment>
<comment type="subcellular location">
    <subcellularLocation>
        <location evidence="4">Nucleus</location>
    </subcellularLocation>
</comment>
<keyword id="KW-0539">Nucleus</keyword>
<keyword id="KW-0804">Transcription</keyword>
<keyword id="KW-0805">Transcription regulation</keyword>
<keyword id="KW-0843">Virulence</keyword>
<protein>
    <recommendedName>
        <fullName evidence="3">Transcription factor pydF</fullName>
    </recommendedName>
    <alternativeName>
        <fullName evidence="3">Pyrrocidines biosynthesis cluster protein F</fullName>
    </alternativeName>
</protein>
<proteinExistence type="predicted"/>
<reference key="1">
    <citation type="journal article" date="2021" name="J. Am. Chem. Soc.">
        <title>Biosynthesis of para-cyclophane-containing hirsutellone family of fungal natural products.</title>
        <authorList>
            <person name="Ohashi M."/>
            <person name="Kakule T.B."/>
            <person name="Tang M.C."/>
            <person name="Jamieson C.S."/>
            <person name="Liu M."/>
            <person name="Zhao Y.L."/>
            <person name="Houk K.N."/>
            <person name="Tang Y."/>
        </authorList>
    </citation>
    <scope>NUCLEOTIDE SEQUENCE [GENOMIC DNA]</scope>
    <scope>FUNCTION</scope>
</reference>
<name>PYDF_ACRSP</name>
<sequence length="439" mass="47950">MGRPQRADKQRRETDGPQKSRPSLTQAQKNSTTIRIHSDDHDQGRPNTNGYARQEQHAWEDASLHSLDFRLCHSSNLEDDEMHGTATDDMIPVNFDFVSPQVPHAMSDLGMYDFGSEATASDLLDPEPCAQFISLASHSAADHVEKATAERPGNDGSSSPSSSLLRTSSSPSQQAVEKLSDLNVQIHRQLTTDHGSLDSAGRRTQLSCAVVSMIEGLKTFRELLFDILSTTSRSPLQAAFRDGQNNGTSRPNTAASQNMQQHRRSGSMLSLSDCDAVSLSNSNSDSRPFQEGSHHFGCLDMSTSLLLLSCYANLILLCREVFAAIRRALPISGHQSTLLELSGFRIGSVAVQEDSDLQITILIQVVVRLIDGIGHCLGYPYSSTTERGEASPSDRGISLELLDLVLGPKGRQGQPSHIGQIEALREDIRNLSKIVYKSI</sequence>
<gene>
    <name evidence="3" type="primary">pydF</name>
</gene>